<protein>
    <recommendedName>
        <fullName evidence="1">5'-nucleotidase SurE</fullName>
        <ecNumber evidence="1">3.1.3.5</ecNumber>
    </recommendedName>
    <alternativeName>
        <fullName evidence="1">Nucleoside 5'-monophosphate phosphohydrolase</fullName>
    </alternativeName>
</protein>
<proteinExistence type="inferred from homology"/>
<dbReference type="EC" id="3.1.3.5" evidence="1"/>
<dbReference type="EMBL" id="CP000102">
    <property type="protein sequence ID" value="ABC56439.1"/>
    <property type="molecule type" value="Genomic_DNA"/>
</dbReference>
<dbReference type="RefSeq" id="WP_011405638.1">
    <property type="nucleotide sequence ID" value="NC_007681.1"/>
</dbReference>
<dbReference type="SMR" id="Q2NI97"/>
<dbReference type="STRING" id="339860.Msp_0020"/>
<dbReference type="GeneID" id="41324593"/>
<dbReference type="KEGG" id="mst:Msp_0020"/>
<dbReference type="eggNOG" id="arCOG02303">
    <property type="taxonomic scope" value="Archaea"/>
</dbReference>
<dbReference type="HOGENOM" id="CLU_045192_1_3_2"/>
<dbReference type="OrthoDB" id="26873at2157"/>
<dbReference type="Proteomes" id="UP000001931">
    <property type="component" value="Chromosome"/>
</dbReference>
<dbReference type="GO" id="GO:0005737">
    <property type="term" value="C:cytoplasm"/>
    <property type="evidence" value="ECO:0007669"/>
    <property type="project" value="UniProtKB-SubCell"/>
</dbReference>
<dbReference type="GO" id="GO:0008253">
    <property type="term" value="F:5'-nucleotidase activity"/>
    <property type="evidence" value="ECO:0007669"/>
    <property type="project" value="UniProtKB-UniRule"/>
</dbReference>
<dbReference type="GO" id="GO:0046872">
    <property type="term" value="F:metal ion binding"/>
    <property type="evidence" value="ECO:0007669"/>
    <property type="project" value="UniProtKB-UniRule"/>
</dbReference>
<dbReference type="GO" id="GO:0000166">
    <property type="term" value="F:nucleotide binding"/>
    <property type="evidence" value="ECO:0007669"/>
    <property type="project" value="UniProtKB-KW"/>
</dbReference>
<dbReference type="Gene3D" id="3.40.1210.10">
    <property type="entry name" value="Survival protein SurE-like phosphatase/nucleotidase"/>
    <property type="match status" value="1"/>
</dbReference>
<dbReference type="HAMAP" id="MF_00060">
    <property type="entry name" value="SurE"/>
    <property type="match status" value="1"/>
</dbReference>
<dbReference type="InterPro" id="IPR030048">
    <property type="entry name" value="SurE"/>
</dbReference>
<dbReference type="InterPro" id="IPR002828">
    <property type="entry name" value="SurE-like_Pase/nucleotidase"/>
</dbReference>
<dbReference type="InterPro" id="IPR036523">
    <property type="entry name" value="SurE-like_sf"/>
</dbReference>
<dbReference type="NCBIfam" id="NF001491">
    <property type="entry name" value="PRK00346.2-1"/>
    <property type="match status" value="1"/>
</dbReference>
<dbReference type="NCBIfam" id="TIGR00087">
    <property type="entry name" value="surE"/>
    <property type="match status" value="1"/>
</dbReference>
<dbReference type="PANTHER" id="PTHR30457">
    <property type="entry name" value="5'-NUCLEOTIDASE SURE"/>
    <property type="match status" value="1"/>
</dbReference>
<dbReference type="PANTHER" id="PTHR30457:SF0">
    <property type="entry name" value="PHOSPHATASE, PUTATIVE (AFU_ORTHOLOGUE AFUA_4G01070)-RELATED"/>
    <property type="match status" value="1"/>
</dbReference>
<dbReference type="Pfam" id="PF01975">
    <property type="entry name" value="SurE"/>
    <property type="match status" value="1"/>
</dbReference>
<dbReference type="SUPFAM" id="SSF64167">
    <property type="entry name" value="SurE-like"/>
    <property type="match status" value="1"/>
</dbReference>
<organism>
    <name type="scientific">Methanosphaera stadtmanae (strain ATCC 43021 / DSM 3091 / JCM 11832 / MCB-3)</name>
    <dbReference type="NCBI Taxonomy" id="339860"/>
    <lineage>
        <taxon>Archaea</taxon>
        <taxon>Methanobacteriati</taxon>
        <taxon>Methanobacteriota</taxon>
        <taxon>Methanomada group</taxon>
        <taxon>Methanobacteria</taxon>
        <taxon>Methanobacteriales</taxon>
        <taxon>Methanobacteriaceae</taxon>
        <taxon>Methanosphaera</taxon>
    </lineage>
</organism>
<reference key="1">
    <citation type="journal article" date="2006" name="J. Bacteriol.">
        <title>The genome sequence of Methanosphaera stadtmanae reveals why this human intestinal archaeon is restricted to methanol and H2 for methane formation and ATP synthesis.</title>
        <authorList>
            <person name="Fricke W.F."/>
            <person name="Seedorf H."/>
            <person name="Henne A."/>
            <person name="Kruer M."/>
            <person name="Liesegang H."/>
            <person name="Hedderich R."/>
            <person name="Gottschalk G."/>
            <person name="Thauer R.K."/>
        </authorList>
    </citation>
    <scope>NUCLEOTIDE SEQUENCE [LARGE SCALE GENOMIC DNA]</scope>
    <source>
        <strain>ATCC 43021 / DSM 3091 / JCM 11832 / MCB-3</strain>
    </source>
</reference>
<gene>
    <name evidence="1" type="primary">surE</name>
    <name type="ordered locus">Msp_0020</name>
</gene>
<feature type="chain" id="PRO_0000235678" description="5'-nucleotidase SurE">
    <location>
        <begin position="1"/>
        <end position="256"/>
    </location>
</feature>
<feature type="binding site" evidence="1">
    <location>
        <position position="8"/>
    </location>
    <ligand>
        <name>a divalent metal cation</name>
        <dbReference type="ChEBI" id="CHEBI:60240"/>
    </ligand>
</feature>
<feature type="binding site" evidence="1">
    <location>
        <position position="9"/>
    </location>
    <ligand>
        <name>a divalent metal cation</name>
        <dbReference type="ChEBI" id="CHEBI:60240"/>
    </ligand>
</feature>
<feature type="binding site" evidence="1">
    <location>
        <position position="39"/>
    </location>
    <ligand>
        <name>a divalent metal cation</name>
        <dbReference type="ChEBI" id="CHEBI:60240"/>
    </ligand>
</feature>
<feature type="binding site" evidence="1">
    <location>
        <position position="95"/>
    </location>
    <ligand>
        <name>a divalent metal cation</name>
        <dbReference type="ChEBI" id="CHEBI:60240"/>
    </ligand>
</feature>
<keyword id="KW-0963">Cytoplasm</keyword>
<keyword id="KW-0378">Hydrolase</keyword>
<keyword id="KW-0479">Metal-binding</keyword>
<keyword id="KW-0547">Nucleotide-binding</keyword>
<keyword id="KW-1185">Reference proteome</keyword>
<name>SURE_METST</name>
<accession>Q2NI97</accession>
<evidence type="ECO:0000255" key="1">
    <source>
        <dbReference type="HAMAP-Rule" id="MF_00060"/>
    </source>
</evidence>
<comment type="function">
    <text evidence="1">Nucleotidase that shows phosphatase activity on nucleoside 5'-monophosphates.</text>
</comment>
<comment type="catalytic activity">
    <reaction evidence="1">
        <text>a ribonucleoside 5'-phosphate + H2O = a ribonucleoside + phosphate</text>
        <dbReference type="Rhea" id="RHEA:12484"/>
        <dbReference type="ChEBI" id="CHEBI:15377"/>
        <dbReference type="ChEBI" id="CHEBI:18254"/>
        <dbReference type="ChEBI" id="CHEBI:43474"/>
        <dbReference type="ChEBI" id="CHEBI:58043"/>
        <dbReference type="EC" id="3.1.3.5"/>
    </reaction>
</comment>
<comment type="cofactor">
    <cofactor evidence="1">
        <name>a divalent metal cation</name>
        <dbReference type="ChEBI" id="CHEBI:60240"/>
    </cofactor>
    <text evidence="1">Binds 1 divalent metal cation per subunit.</text>
</comment>
<comment type="subcellular location">
    <subcellularLocation>
        <location evidence="1">Cytoplasm</location>
    </subcellularLocation>
</comment>
<comment type="similarity">
    <text evidence="1">Belongs to the SurE nucleotidase family.</text>
</comment>
<sequence>MNILITNDDGLTSNGIIAARNSVEDLGQTTLVAPLTQQSGVGHAITLMKPLRAIKTELSDKTYGYAVTGTPTDCVILAVKSIMDKKPDLIISGMNIGENLSRSITTSGTLGATFEAASFGIPAIAVSLQVNREDLKFRTGVNFIDYSHAESIVNKLAKKVIKHGMPEGVDILNLNIPANPDSDEIIQSNFADRMFSTDVEKRIDPYGHPYYWIVGDLIDDGIEGTDVHTLHILNQPAVTPISIDMDAQVNISKWLD</sequence>